<evidence type="ECO:0000255" key="1">
    <source>
        <dbReference type="HAMAP-Rule" id="MF_01445"/>
    </source>
</evidence>
<name>TSAD_CHRFK</name>
<gene>
    <name evidence="1" type="primary">tsaD</name>
    <name type="synonym">gcp</name>
    <name type="ordered locus">GFO_1645</name>
</gene>
<feature type="chain" id="PRO_0000303378" description="tRNA N6-adenosine threonylcarbamoyltransferase">
    <location>
        <begin position="1"/>
        <end position="340"/>
    </location>
</feature>
<feature type="binding site" evidence="1">
    <location>
        <position position="114"/>
    </location>
    <ligand>
        <name>Fe cation</name>
        <dbReference type="ChEBI" id="CHEBI:24875"/>
    </ligand>
</feature>
<feature type="binding site" evidence="1">
    <location>
        <position position="118"/>
    </location>
    <ligand>
        <name>Fe cation</name>
        <dbReference type="ChEBI" id="CHEBI:24875"/>
    </ligand>
</feature>
<feature type="binding site" evidence="1">
    <location>
        <begin position="140"/>
        <end position="144"/>
    </location>
    <ligand>
        <name>substrate</name>
    </ligand>
</feature>
<feature type="binding site" evidence="1">
    <location>
        <position position="173"/>
    </location>
    <ligand>
        <name>substrate</name>
    </ligand>
</feature>
<feature type="binding site" evidence="1">
    <location>
        <position position="186"/>
    </location>
    <ligand>
        <name>substrate</name>
    </ligand>
</feature>
<feature type="binding site" evidence="1">
    <location>
        <position position="190"/>
    </location>
    <ligand>
        <name>substrate</name>
    </ligand>
</feature>
<feature type="binding site" evidence="1">
    <location>
        <position position="281"/>
    </location>
    <ligand>
        <name>substrate</name>
    </ligand>
</feature>
<feature type="binding site" evidence="1">
    <location>
        <position position="309"/>
    </location>
    <ligand>
        <name>Fe cation</name>
        <dbReference type="ChEBI" id="CHEBI:24875"/>
    </ligand>
</feature>
<proteinExistence type="inferred from homology"/>
<protein>
    <recommendedName>
        <fullName evidence="1">tRNA N6-adenosine threonylcarbamoyltransferase</fullName>
        <ecNumber evidence="1">2.3.1.234</ecNumber>
    </recommendedName>
    <alternativeName>
        <fullName evidence="1">N6-L-threonylcarbamoyladenine synthase</fullName>
        <shortName evidence="1">t(6)A synthase</shortName>
    </alternativeName>
    <alternativeName>
        <fullName evidence="1">t(6)A37 threonylcarbamoyladenosine biosynthesis protein TsaD</fullName>
    </alternativeName>
    <alternativeName>
        <fullName evidence="1">tRNA threonylcarbamoyladenosine biosynthesis protein TsaD</fullName>
    </alternativeName>
</protein>
<reference key="1">
    <citation type="journal article" date="2006" name="Environ. Microbiol.">
        <title>Whole genome analysis of the marine Bacteroidetes'Gramella forsetii' reveals adaptations to degradation of polymeric organic matter.</title>
        <authorList>
            <person name="Bauer M."/>
            <person name="Kube M."/>
            <person name="Teeling H."/>
            <person name="Richter M."/>
            <person name="Lombardot T."/>
            <person name="Allers E."/>
            <person name="Wuerdemann C.A."/>
            <person name="Quast C."/>
            <person name="Kuhl H."/>
            <person name="Knaust F."/>
            <person name="Woebken D."/>
            <person name="Bischof K."/>
            <person name="Mussmann M."/>
            <person name="Choudhuri J.V."/>
            <person name="Meyer F."/>
            <person name="Reinhardt R."/>
            <person name="Amann R.I."/>
            <person name="Gloeckner F.O."/>
        </authorList>
    </citation>
    <scope>NUCLEOTIDE SEQUENCE [LARGE SCALE GENOMIC DNA]</scope>
    <source>
        <strain>DSM 17595 / CGMCC 1.15422 / KT0803</strain>
    </source>
</reference>
<organism>
    <name type="scientific">Christiangramia forsetii (strain DSM 17595 / CGMCC 1.15422 / KT0803)</name>
    <name type="common">Gramella forsetii</name>
    <dbReference type="NCBI Taxonomy" id="411154"/>
    <lineage>
        <taxon>Bacteria</taxon>
        <taxon>Pseudomonadati</taxon>
        <taxon>Bacteroidota</taxon>
        <taxon>Flavobacteriia</taxon>
        <taxon>Flavobacteriales</taxon>
        <taxon>Flavobacteriaceae</taxon>
        <taxon>Christiangramia</taxon>
    </lineage>
</organism>
<comment type="function">
    <text evidence="1">Required for the formation of a threonylcarbamoyl group on adenosine at position 37 (t(6)A37) in tRNAs that read codons beginning with adenine. Is involved in the transfer of the threonylcarbamoyl moiety of threonylcarbamoyl-AMP (TC-AMP) to the N6 group of A37, together with TsaE and TsaB. TsaD likely plays a direct catalytic role in this reaction.</text>
</comment>
<comment type="catalytic activity">
    <reaction evidence="1">
        <text>L-threonylcarbamoyladenylate + adenosine(37) in tRNA = N(6)-L-threonylcarbamoyladenosine(37) in tRNA + AMP + H(+)</text>
        <dbReference type="Rhea" id="RHEA:37059"/>
        <dbReference type="Rhea" id="RHEA-COMP:10162"/>
        <dbReference type="Rhea" id="RHEA-COMP:10163"/>
        <dbReference type="ChEBI" id="CHEBI:15378"/>
        <dbReference type="ChEBI" id="CHEBI:73682"/>
        <dbReference type="ChEBI" id="CHEBI:74411"/>
        <dbReference type="ChEBI" id="CHEBI:74418"/>
        <dbReference type="ChEBI" id="CHEBI:456215"/>
        <dbReference type="EC" id="2.3.1.234"/>
    </reaction>
</comment>
<comment type="cofactor">
    <cofactor evidence="1">
        <name>Fe(2+)</name>
        <dbReference type="ChEBI" id="CHEBI:29033"/>
    </cofactor>
    <text evidence="1">Binds 1 Fe(2+) ion per subunit.</text>
</comment>
<comment type="subcellular location">
    <subcellularLocation>
        <location evidence="1">Cytoplasm</location>
    </subcellularLocation>
</comment>
<comment type="similarity">
    <text evidence="1">Belongs to the KAE1 / TsaD family.</text>
</comment>
<accession>A0M1X3</accession>
<sequence length="340" mass="37232">MSDQKINILAIESSCDDTAAAVLCNGKILSNIVATQKVHEQYGGVVPELASRAHQQNIVPVIHQALAKANIDKKDVSAIAFTRGPGLMGSLLVGTSFAKSLSMGLNIPLIEINHMQAHILAHFIEEDDFEKPTFPFLAMTISGGHTQIVKVTDYFKMEVIGETIDDAVGEAFDKSAKILGLPYPGGPLIDKYAQEGDPKAFKFPKPKVDGLNFSFSGFKTAVLYFVQRETKNDPEFVEKNLKDICASIQYTIIGILIDKLKKAVKETGITQVAIAGGVSANSGIRQALKDAEQKWGWKCFVPKFEYTTDNAAMIGIAGYHKYLKKDFADFSVTAQSRYKF</sequence>
<dbReference type="EC" id="2.3.1.234" evidence="1"/>
<dbReference type="EMBL" id="CU207366">
    <property type="protein sequence ID" value="CAL66618.1"/>
    <property type="molecule type" value="Genomic_DNA"/>
</dbReference>
<dbReference type="RefSeq" id="WP_011709526.1">
    <property type="nucleotide sequence ID" value="NC_008571.1"/>
</dbReference>
<dbReference type="SMR" id="A0M1X3"/>
<dbReference type="STRING" id="411154.GFO_1645"/>
<dbReference type="KEGG" id="gfo:GFO_1645"/>
<dbReference type="eggNOG" id="COG0533">
    <property type="taxonomic scope" value="Bacteria"/>
</dbReference>
<dbReference type="HOGENOM" id="CLU_023208_0_2_10"/>
<dbReference type="OrthoDB" id="9806197at2"/>
<dbReference type="Proteomes" id="UP000000755">
    <property type="component" value="Chromosome"/>
</dbReference>
<dbReference type="GO" id="GO:0005737">
    <property type="term" value="C:cytoplasm"/>
    <property type="evidence" value="ECO:0007669"/>
    <property type="project" value="UniProtKB-SubCell"/>
</dbReference>
<dbReference type="GO" id="GO:0005506">
    <property type="term" value="F:iron ion binding"/>
    <property type="evidence" value="ECO:0007669"/>
    <property type="project" value="UniProtKB-UniRule"/>
</dbReference>
<dbReference type="GO" id="GO:0061711">
    <property type="term" value="F:N(6)-L-threonylcarbamoyladenine synthase activity"/>
    <property type="evidence" value="ECO:0007669"/>
    <property type="project" value="UniProtKB-EC"/>
</dbReference>
<dbReference type="GO" id="GO:0002949">
    <property type="term" value="P:tRNA threonylcarbamoyladenosine modification"/>
    <property type="evidence" value="ECO:0007669"/>
    <property type="project" value="UniProtKB-UniRule"/>
</dbReference>
<dbReference type="CDD" id="cd24133">
    <property type="entry name" value="ASKHA_NBD_TsaD_bac"/>
    <property type="match status" value="1"/>
</dbReference>
<dbReference type="FunFam" id="3.30.420.40:FF:000012">
    <property type="entry name" value="tRNA N6-adenosine threonylcarbamoyltransferase"/>
    <property type="match status" value="1"/>
</dbReference>
<dbReference type="FunFam" id="3.30.420.40:FF:000040">
    <property type="entry name" value="tRNA N6-adenosine threonylcarbamoyltransferase"/>
    <property type="match status" value="1"/>
</dbReference>
<dbReference type="Gene3D" id="3.30.420.40">
    <property type="match status" value="2"/>
</dbReference>
<dbReference type="HAMAP" id="MF_01445">
    <property type="entry name" value="TsaD"/>
    <property type="match status" value="1"/>
</dbReference>
<dbReference type="InterPro" id="IPR043129">
    <property type="entry name" value="ATPase_NBD"/>
</dbReference>
<dbReference type="InterPro" id="IPR000905">
    <property type="entry name" value="Gcp-like_dom"/>
</dbReference>
<dbReference type="InterPro" id="IPR017861">
    <property type="entry name" value="KAE1/TsaD"/>
</dbReference>
<dbReference type="InterPro" id="IPR017860">
    <property type="entry name" value="Peptidase_M22_CS"/>
</dbReference>
<dbReference type="InterPro" id="IPR022450">
    <property type="entry name" value="TsaD"/>
</dbReference>
<dbReference type="NCBIfam" id="TIGR00329">
    <property type="entry name" value="gcp_kae1"/>
    <property type="match status" value="1"/>
</dbReference>
<dbReference type="NCBIfam" id="TIGR03723">
    <property type="entry name" value="T6A_TsaD_YgjD"/>
    <property type="match status" value="1"/>
</dbReference>
<dbReference type="PANTHER" id="PTHR11735">
    <property type="entry name" value="TRNA N6-ADENOSINE THREONYLCARBAMOYLTRANSFERASE"/>
    <property type="match status" value="1"/>
</dbReference>
<dbReference type="PANTHER" id="PTHR11735:SF6">
    <property type="entry name" value="TRNA N6-ADENOSINE THREONYLCARBAMOYLTRANSFERASE, MITOCHONDRIAL"/>
    <property type="match status" value="1"/>
</dbReference>
<dbReference type="Pfam" id="PF00814">
    <property type="entry name" value="TsaD"/>
    <property type="match status" value="1"/>
</dbReference>
<dbReference type="PRINTS" id="PR00789">
    <property type="entry name" value="OSIALOPTASE"/>
</dbReference>
<dbReference type="SUPFAM" id="SSF53067">
    <property type="entry name" value="Actin-like ATPase domain"/>
    <property type="match status" value="1"/>
</dbReference>
<dbReference type="PROSITE" id="PS01016">
    <property type="entry name" value="GLYCOPROTEASE"/>
    <property type="match status" value="1"/>
</dbReference>
<keyword id="KW-0012">Acyltransferase</keyword>
<keyword id="KW-0963">Cytoplasm</keyword>
<keyword id="KW-0408">Iron</keyword>
<keyword id="KW-0479">Metal-binding</keyword>
<keyword id="KW-0808">Transferase</keyword>
<keyword id="KW-0819">tRNA processing</keyword>